<sequence length="66" mass="7606">MMIPIRCFTCGSLIADKWQPFITRVNAGENPGKVLDDLGVKRYCCRRMLLSHIDIISEVIHYTRPI</sequence>
<evidence type="ECO:0000255" key="1">
    <source>
        <dbReference type="HAMAP-Rule" id="MF_00250"/>
    </source>
</evidence>
<comment type="function">
    <text evidence="1">DNA-dependent RNA polymerase (RNAP) catalyzes the transcription of DNA into RNA using the four ribonucleoside triphosphates as substrates.</text>
</comment>
<comment type="catalytic activity">
    <reaction evidence="1">
        <text>RNA(n) + a ribonucleoside 5'-triphosphate = RNA(n+1) + diphosphate</text>
        <dbReference type="Rhea" id="RHEA:21248"/>
        <dbReference type="Rhea" id="RHEA-COMP:14527"/>
        <dbReference type="Rhea" id="RHEA-COMP:17342"/>
        <dbReference type="ChEBI" id="CHEBI:33019"/>
        <dbReference type="ChEBI" id="CHEBI:61557"/>
        <dbReference type="ChEBI" id="CHEBI:140395"/>
        <dbReference type="EC" id="2.7.7.6"/>
    </reaction>
</comment>
<comment type="cofactor">
    <cofactor evidence="1">
        <name>Zn(2+)</name>
        <dbReference type="ChEBI" id="CHEBI:29105"/>
    </cofactor>
    <text evidence="1">Binds 1 zinc ion.</text>
</comment>
<comment type="subunit">
    <text evidence="1">Part of the RNA polymerase complex.</text>
</comment>
<comment type="subcellular location">
    <subcellularLocation>
        <location evidence="1">Cytoplasm</location>
    </subcellularLocation>
</comment>
<comment type="similarity">
    <text evidence="1">Belongs to the archaeal Rpo10/eukaryotic RPB10 RNA polymerase subunit family.</text>
</comment>
<dbReference type="EC" id="2.7.7.6" evidence="1"/>
<dbReference type="EMBL" id="CP001402">
    <property type="protein sequence ID" value="ACR42661.1"/>
    <property type="molecule type" value="Genomic_DNA"/>
</dbReference>
<dbReference type="RefSeq" id="WP_012712019.1">
    <property type="nucleotide sequence ID" value="NC_012726.1"/>
</dbReference>
<dbReference type="SMR" id="C4KJ97"/>
<dbReference type="KEGG" id="sid:M164_2059"/>
<dbReference type="HOGENOM" id="CLU_143122_1_1_2"/>
<dbReference type="Proteomes" id="UP000001479">
    <property type="component" value="Chromosome"/>
</dbReference>
<dbReference type="GO" id="GO:0005737">
    <property type="term" value="C:cytoplasm"/>
    <property type="evidence" value="ECO:0007669"/>
    <property type="project" value="UniProtKB-SubCell"/>
</dbReference>
<dbReference type="GO" id="GO:0000428">
    <property type="term" value="C:DNA-directed RNA polymerase complex"/>
    <property type="evidence" value="ECO:0007669"/>
    <property type="project" value="UniProtKB-KW"/>
</dbReference>
<dbReference type="GO" id="GO:0003677">
    <property type="term" value="F:DNA binding"/>
    <property type="evidence" value="ECO:0007669"/>
    <property type="project" value="InterPro"/>
</dbReference>
<dbReference type="GO" id="GO:0003899">
    <property type="term" value="F:DNA-directed RNA polymerase activity"/>
    <property type="evidence" value="ECO:0007669"/>
    <property type="project" value="UniProtKB-UniRule"/>
</dbReference>
<dbReference type="GO" id="GO:0008270">
    <property type="term" value="F:zinc ion binding"/>
    <property type="evidence" value="ECO:0007669"/>
    <property type="project" value="UniProtKB-UniRule"/>
</dbReference>
<dbReference type="GO" id="GO:0006351">
    <property type="term" value="P:DNA-templated transcription"/>
    <property type="evidence" value="ECO:0007669"/>
    <property type="project" value="UniProtKB-UniRule"/>
</dbReference>
<dbReference type="FunFam" id="1.10.10.60:FF:000335">
    <property type="entry name" value="DNA-directed RNA polymerase subunit N, putative"/>
    <property type="match status" value="1"/>
</dbReference>
<dbReference type="Gene3D" id="1.10.10.60">
    <property type="entry name" value="Homeodomain-like"/>
    <property type="match status" value="1"/>
</dbReference>
<dbReference type="HAMAP" id="MF_00250">
    <property type="entry name" value="RNApol_arch_Rpo10"/>
    <property type="match status" value="1"/>
</dbReference>
<dbReference type="InterPro" id="IPR023580">
    <property type="entry name" value="RNA_pol_su_RPB10"/>
</dbReference>
<dbReference type="InterPro" id="IPR020789">
    <property type="entry name" value="RNA_pol_suN_Zn-BS"/>
</dbReference>
<dbReference type="InterPro" id="IPR000268">
    <property type="entry name" value="RPABC5/Rpb10"/>
</dbReference>
<dbReference type="NCBIfam" id="NF003089">
    <property type="entry name" value="PRK04016.1"/>
    <property type="match status" value="1"/>
</dbReference>
<dbReference type="PANTHER" id="PTHR23431:SF3">
    <property type="entry name" value="DNA-DIRECTED RNA POLYMERASES I, II, AND III SUBUNIT RPABC5"/>
    <property type="match status" value="1"/>
</dbReference>
<dbReference type="PANTHER" id="PTHR23431">
    <property type="entry name" value="DNA-DIRECTED RNA POLYMERASES I, II, AND III SUBUNIT RPABC5 FAMILY MEMBER"/>
    <property type="match status" value="1"/>
</dbReference>
<dbReference type="Pfam" id="PF01194">
    <property type="entry name" value="RNA_pol_N"/>
    <property type="match status" value="1"/>
</dbReference>
<dbReference type="PIRSF" id="PIRSF005653">
    <property type="entry name" value="RNA_pol_N/8_sub"/>
    <property type="match status" value="1"/>
</dbReference>
<dbReference type="SUPFAM" id="SSF46924">
    <property type="entry name" value="RNA polymerase subunit RPB10"/>
    <property type="match status" value="1"/>
</dbReference>
<dbReference type="PROSITE" id="PS01112">
    <property type="entry name" value="RNA_POL_N_8KD"/>
    <property type="match status" value="1"/>
</dbReference>
<keyword id="KW-0963">Cytoplasm</keyword>
<keyword id="KW-0240">DNA-directed RNA polymerase</keyword>
<keyword id="KW-0479">Metal-binding</keyword>
<keyword id="KW-0548">Nucleotidyltransferase</keyword>
<keyword id="KW-0804">Transcription</keyword>
<keyword id="KW-0808">Transferase</keyword>
<keyword id="KW-0862">Zinc</keyword>
<feature type="chain" id="PRO_1000204535" description="DNA-directed RNA polymerase subunit Rpo10">
    <location>
        <begin position="1"/>
        <end position="66"/>
    </location>
</feature>
<feature type="binding site" evidence="1">
    <location>
        <position position="7"/>
    </location>
    <ligand>
        <name>Zn(2+)</name>
        <dbReference type="ChEBI" id="CHEBI:29105"/>
    </ligand>
</feature>
<feature type="binding site" evidence="1">
    <location>
        <position position="10"/>
    </location>
    <ligand>
        <name>Zn(2+)</name>
        <dbReference type="ChEBI" id="CHEBI:29105"/>
    </ligand>
</feature>
<feature type="binding site" evidence="1">
    <location>
        <position position="44"/>
    </location>
    <ligand>
        <name>Zn(2+)</name>
        <dbReference type="ChEBI" id="CHEBI:29105"/>
    </ligand>
</feature>
<feature type="binding site" evidence="1">
    <location>
        <position position="45"/>
    </location>
    <ligand>
        <name>Zn(2+)</name>
        <dbReference type="ChEBI" id="CHEBI:29105"/>
    </ligand>
</feature>
<organism>
    <name type="scientific">Saccharolobus islandicus (strain M.16.4 / Kamchatka #3)</name>
    <name type="common">Sulfolobus islandicus</name>
    <dbReference type="NCBI Taxonomy" id="426118"/>
    <lineage>
        <taxon>Archaea</taxon>
        <taxon>Thermoproteota</taxon>
        <taxon>Thermoprotei</taxon>
        <taxon>Sulfolobales</taxon>
        <taxon>Sulfolobaceae</taxon>
        <taxon>Saccharolobus</taxon>
    </lineage>
</organism>
<accession>C4KJ97</accession>
<gene>
    <name evidence="1" type="primary">rpo10</name>
    <name evidence="1" type="synonym">rpoN</name>
    <name type="ordered locus">M164_2059</name>
</gene>
<protein>
    <recommendedName>
        <fullName evidence="1">DNA-directed RNA polymerase subunit Rpo10</fullName>
        <ecNumber evidence="1">2.7.7.6</ecNumber>
    </recommendedName>
    <alternativeName>
        <fullName evidence="1">DNA-directed RNA polymerase subunit N</fullName>
    </alternativeName>
</protein>
<proteinExistence type="inferred from homology"/>
<name>RPO10_SACI6</name>
<reference key="1">
    <citation type="journal article" date="2009" name="Proc. Natl. Acad. Sci. U.S.A.">
        <title>Biogeography of the Sulfolobus islandicus pan-genome.</title>
        <authorList>
            <person name="Reno M.L."/>
            <person name="Held N.L."/>
            <person name="Fields C.J."/>
            <person name="Burke P.V."/>
            <person name="Whitaker R.J."/>
        </authorList>
    </citation>
    <scope>NUCLEOTIDE SEQUENCE [LARGE SCALE GENOMIC DNA]</scope>
    <source>
        <strain>M.16.4 / Kamchatka #3</strain>
    </source>
</reference>